<proteinExistence type="evidence at protein level"/>
<feature type="chain" id="PRO_0000396099" description="Small ribosomal subunit protein bS6">
    <location>
        <begin position="1"/>
        <end position="90"/>
    </location>
</feature>
<feature type="cross-link" description="Isoglutamyl lysine isopeptide (Lys-Gln) (interchain with Q-Cter in protein Pup)" evidence="2">
    <location>
        <position position="33"/>
    </location>
</feature>
<feature type="strand" evidence="4">
    <location>
        <begin position="6"/>
        <end position="8"/>
    </location>
</feature>
<feature type="strand" evidence="4">
    <location>
        <begin position="46"/>
        <end position="48"/>
    </location>
</feature>
<feature type="helix" evidence="4">
    <location>
        <begin position="63"/>
        <end position="75"/>
    </location>
</feature>
<feature type="strand" evidence="4">
    <location>
        <begin position="78"/>
        <end position="82"/>
    </location>
</feature>
<comment type="function">
    <text evidence="1">Binds together with bS18 to 16S ribosomal RNA.</text>
</comment>
<comment type="similarity">
    <text evidence="3">Belongs to the bacterial ribosomal protein bS6 family.</text>
</comment>
<comment type="sequence caution" evidence="3">
    <conflict type="erroneous initiation">
        <sequence resource="EMBL-CDS" id="AFP43139"/>
    </conflict>
    <text>Extended N-terminus.</text>
</comment>
<gene>
    <name type="primary">rpsF</name>
    <name type="ordered locus">MSMEG_6897</name>
    <name type="ordered locus">MSMEI_6713</name>
</gene>
<accession>A0R7F9</accession>
<accession>I7GGR9</accession>
<evidence type="ECO:0000250" key="1"/>
<evidence type="ECO:0000269" key="2">
    <source>
    </source>
</evidence>
<evidence type="ECO:0000305" key="3"/>
<evidence type="ECO:0007829" key="4">
    <source>
        <dbReference type="PDB" id="5XYU"/>
    </source>
</evidence>
<name>RS6_MYCS2</name>
<keyword id="KW-0002">3D-structure</keyword>
<keyword id="KW-1017">Isopeptide bond</keyword>
<keyword id="KW-1185">Reference proteome</keyword>
<keyword id="KW-0687">Ribonucleoprotein</keyword>
<keyword id="KW-0689">Ribosomal protein</keyword>
<keyword id="KW-0694">RNA-binding</keyword>
<keyword id="KW-0699">rRNA-binding</keyword>
<keyword id="KW-0832">Ubl conjugation</keyword>
<reference key="1">
    <citation type="submission" date="2006-10" db="EMBL/GenBank/DDBJ databases">
        <authorList>
            <person name="Fleischmann R.D."/>
            <person name="Dodson R.J."/>
            <person name="Haft D.H."/>
            <person name="Merkel J.S."/>
            <person name="Nelson W.C."/>
            <person name="Fraser C.M."/>
        </authorList>
    </citation>
    <scope>NUCLEOTIDE SEQUENCE [LARGE SCALE GENOMIC DNA]</scope>
    <source>
        <strain>ATCC 700084 / mc(2)155</strain>
    </source>
</reference>
<reference key="2">
    <citation type="journal article" date="2007" name="Genome Biol.">
        <title>Interrupted coding sequences in Mycobacterium smegmatis: authentic mutations or sequencing errors?</title>
        <authorList>
            <person name="Deshayes C."/>
            <person name="Perrodou E."/>
            <person name="Gallien S."/>
            <person name="Euphrasie D."/>
            <person name="Schaeffer C."/>
            <person name="Van-Dorsselaer A."/>
            <person name="Poch O."/>
            <person name="Lecompte O."/>
            <person name="Reyrat J.-M."/>
        </authorList>
    </citation>
    <scope>NUCLEOTIDE SEQUENCE [LARGE SCALE GENOMIC DNA]</scope>
    <source>
        <strain>ATCC 700084 / mc(2)155</strain>
    </source>
</reference>
<reference key="3">
    <citation type="journal article" date="2009" name="Genome Res.">
        <title>Ortho-proteogenomics: multiple proteomes investigation through orthology and a new MS-based protocol.</title>
        <authorList>
            <person name="Gallien S."/>
            <person name="Perrodou E."/>
            <person name="Carapito C."/>
            <person name="Deshayes C."/>
            <person name="Reyrat J.-M."/>
            <person name="Van Dorsselaer A."/>
            <person name="Poch O."/>
            <person name="Schaeffer C."/>
            <person name="Lecompte O."/>
        </authorList>
    </citation>
    <scope>NUCLEOTIDE SEQUENCE [LARGE SCALE GENOMIC DNA]</scope>
    <source>
        <strain>ATCC 700084 / mc(2)155</strain>
    </source>
</reference>
<reference key="4">
    <citation type="journal article" date="2010" name="Mol. Biosyst.">
        <title>Expansion of the mycobacterial 'PUPylome'.</title>
        <authorList>
            <person name="Watrous J."/>
            <person name="Burns K."/>
            <person name="Liu W.T."/>
            <person name="Patel A."/>
            <person name="Hook V."/>
            <person name="Bafna V."/>
            <person name="Barry C.E. III"/>
            <person name="Bark S."/>
            <person name="Dorrestein P.C."/>
        </authorList>
    </citation>
    <scope>PUPYLATION AT LYS-33</scope>
    <scope>IDENTIFICATION BY MASS SPECTROMETRY</scope>
</reference>
<organism>
    <name type="scientific">Mycolicibacterium smegmatis (strain ATCC 700084 / mc(2)155)</name>
    <name type="common">Mycobacterium smegmatis</name>
    <dbReference type="NCBI Taxonomy" id="246196"/>
    <lineage>
        <taxon>Bacteria</taxon>
        <taxon>Bacillati</taxon>
        <taxon>Actinomycetota</taxon>
        <taxon>Actinomycetes</taxon>
        <taxon>Mycobacteriales</taxon>
        <taxon>Mycobacteriaceae</taxon>
        <taxon>Mycolicibacterium</taxon>
    </lineage>
</organism>
<protein>
    <recommendedName>
        <fullName evidence="3">Small ribosomal subunit protein bS6</fullName>
    </recommendedName>
    <alternativeName>
        <fullName>30S ribosomal protein S6</fullName>
    </alternativeName>
</protein>
<sequence length="90" mass="10185">MVILDPTLDERTVAPSLETFLNVIRKDGGTVDKVDIWGRRRLAYEIAKHAEGIYAVIDVKAEPATVSELDRQLNLNESVLRTKVLRTDKH</sequence>
<dbReference type="EMBL" id="CP000480">
    <property type="protein sequence ID" value="ABK72345.1"/>
    <property type="molecule type" value="Genomic_DNA"/>
</dbReference>
<dbReference type="EMBL" id="CP001663">
    <property type="protein sequence ID" value="AFP43139.1"/>
    <property type="status" value="ALT_INIT"/>
    <property type="molecule type" value="Genomic_DNA"/>
</dbReference>
<dbReference type="RefSeq" id="YP_891097.1">
    <property type="nucleotide sequence ID" value="NC_008596.1"/>
</dbReference>
<dbReference type="PDB" id="5XYU">
    <property type="method" value="EM"/>
    <property type="resolution" value="3.45 A"/>
    <property type="chains" value="F=1-90"/>
</dbReference>
<dbReference type="PDB" id="8V9J">
    <property type="method" value="EM"/>
    <property type="resolution" value="3.10 A"/>
    <property type="chains" value="f=1-90"/>
</dbReference>
<dbReference type="PDB" id="8V9K">
    <property type="method" value="EM"/>
    <property type="resolution" value="3.10 A"/>
    <property type="chains" value="f=1-90"/>
</dbReference>
<dbReference type="PDB" id="8V9L">
    <property type="method" value="EM"/>
    <property type="resolution" value="3.00 A"/>
    <property type="chains" value="f=1-90"/>
</dbReference>
<dbReference type="PDB" id="8WHX">
    <property type="method" value="EM"/>
    <property type="resolution" value="2.80 A"/>
    <property type="chains" value="g=1-90"/>
</dbReference>
<dbReference type="PDB" id="8WI7">
    <property type="method" value="EM"/>
    <property type="resolution" value="3.50 A"/>
    <property type="chains" value="g=1-90"/>
</dbReference>
<dbReference type="PDB" id="8WI9">
    <property type="method" value="EM"/>
    <property type="resolution" value="3.50 A"/>
    <property type="chains" value="g=1-90"/>
</dbReference>
<dbReference type="PDB" id="8WIB">
    <property type="method" value="EM"/>
    <property type="resolution" value="3.50 A"/>
    <property type="chains" value="g=1-90"/>
</dbReference>
<dbReference type="PDB" id="8WID">
    <property type="method" value="EM"/>
    <property type="resolution" value="3.50 A"/>
    <property type="chains" value="g=1-90"/>
</dbReference>
<dbReference type="PDB" id="8WIF">
    <property type="method" value="EM"/>
    <property type="resolution" value="2.90 A"/>
    <property type="chains" value="g=1-90"/>
</dbReference>
<dbReference type="PDBsum" id="5XYU"/>
<dbReference type="PDBsum" id="8V9J"/>
<dbReference type="PDBsum" id="8V9K"/>
<dbReference type="PDBsum" id="8V9L"/>
<dbReference type="PDBsum" id="8WHX"/>
<dbReference type="PDBsum" id="8WI7"/>
<dbReference type="PDBsum" id="8WI9"/>
<dbReference type="PDBsum" id="8WIB"/>
<dbReference type="PDBsum" id="8WID"/>
<dbReference type="PDBsum" id="8WIF"/>
<dbReference type="EMDB" id="EMD-6790"/>
<dbReference type="SMR" id="A0R7F9"/>
<dbReference type="IntAct" id="A0R7F9">
    <property type="interactions" value="1"/>
</dbReference>
<dbReference type="STRING" id="246196.MSMEG_6897"/>
<dbReference type="PaxDb" id="246196-MSMEI_6713"/>
<dbReference type="KEGG" id="msg:MSMEI_6713"/>
<dbReference type="KEGG" id="msm:MSMEG_6897"/>
<dbReference type="PATRIC" id="fig|246196.19.peg.6718"/>
<dbReference type="eggNOG" id="COG0360">
    <property type="taxonomic scope" value="Bacteria"/>
</dbReference>
<dbReference type="OrthoDB" id="9812702at2"/>
<dbReference type="Proteomes" id="UP000000757">
    <property type="component" value="Chromosome"/>
</dbReference>
<dbReference type="Proteomes" id="UP000006158">
    <property type="component" value="Chromosome"/>
</dbReference>
<dbReference type="GO" id="GO:0005737">
    <property type="term" value="C:cytoplasm"/>
    <property type="evidence" value="ECO:0007669"/>
    <property type="project" value="UniProtKB-ARBA"/>
</dbReference>
<dbReference type="GO" id="GO:1990904">
    <property type="term" value="C:ribonucleoprotein complex"/>
    <property type="evidence" value="ECO:0007669"/>
    <property type="project" value="UniProtKB-KW"/>
</dbReference>
<dbReference type="GO" id="GO:0005840">
    <property type="term" value="C:ribosome"/>
    <property type="evidence" value="ECO:0007669"/>
    <property type="project" value="UniProtKB-KW"/>
</dbReference>
<dbReference type="GO" id="GO:0070181">
    <property type="term" value="F:small ribosomal subunit rRNA binding"/>
    <property type="evidence" value="ECO:0007669"/>
    <property type="project" value="TreeGrafter"/>
</dbReference>
<dbReference type="GO" id="GO:0003735">
    <property type="term" value="F:structural constituent of ribosome"/>
    <property type="evidence" value="ECO:0007669"/>
    <property type="project" value="InterPro"/>
</dbReference>
<dbReference type="GO" id="GO:0006412">
    <property type="term" value="P:translation"/>
    <property type="evidence" value="ECO:0007669"/>
    <property type="project" value="UniProtKB-UniRule"/>
</dbReference>
<dbReference type="CDD" id="cd00473">
    <property type="entry name" value="bS6"/>
    <property type="match status" value="1"/>
</dbReference>
<dbReference type="FunFam" id="3.30.70.60:FF:000002">
    <property type="entry name" value="30S ribosomal protein S6"/>
    <property type="match status" value="1"/>
</dbReference>
<dbReference type="Gene3D" id="3.30.70.60">
    <property type="match status" value="1"/>
</dbReference>
<dbReference type="HAMAP" id="MF_00360">
    <property type="entry name" value="Ribosomal_bS6"/>
    <property type="match status" value="1"/>
</dbReference>
<dbReference type="InterPro" id="IPR000529">
    <property type="entry name" value="Ribosomal_bS6"/>
</dbReference>
<dbReference type="InterPro" id="IPR020815">
    <property type="entry name" value="Ribosomal_bS6_CS"/>
</dbReference>
<dbReference type="InterPro" id="IPR035980">
    <property type="entry name" value="Ribosomal_bS6_sf"/>
</dbReference>
<dbReference type="InterPro" id="IPR020814">
    <property type="entry name" value="Ribosomal_S6_plastid/chlpt"/>
</dbReference>
<dbReference type="InterPro" id="IPR014717">
    <property type="entry name" value="Transl_elong_EF1B/ribsomal_bS6"/>
</dbReference>
<dbReference type="NCBIfam" id="TIGR00166">
    <property type="entry name" value="S6"/>
    <property type="match status" value="1"/>
</dbReference>
<dbReference type="PANTHER" id="PTHR21011">
    <property type="entry name" value="MITOCHONDRIAL 28S RIBOSOMAL PROTEIN S6"/>
    <property type="match status" value="1"/>
</dbReference>
<dbReference type="PANTHER" id="PTHR21011:SF1">
    <property type="entry name" value="SMALL RIBOSOMAL SUBUNIT PROTEIN BS6M"/>
    <property type="match status" value="1"/>
</dbReference>
<dbReference type="Pfam" id="PF01250">
    <property type="entry name" value="Ribosomal_S6"/>
    <property type="match status" value="1"/>
</dbReference>
<dbReference type="SUPFAM" id="SSF54995">
    <property type="entry name" value="Ribosomal protein S6"/>
    <property type="match status" value="1"/>
</dbReference>
<dbReference type="PROSITE" id="PS01048">
    <property type="entry name" value="RIBOSOMAL_S6"/>
    <property type="match status" value="1"/>
</dbReference>